<keyword id="KW-0002">3D-structure</keyword>
<keyword id="KW-0007">Acetylation</keyword>
<keyword id="KW-0963">Cytoplasm</keyword>
<keyword id="KW-0903">Direct protein sequencing</keyword>
<keyword id="KW-1017">Isopeptide bond</keyword>
<keyword id="KW-0488">Methylation</keyword>
<keyword id="KW-0539">Nucleus</keyword>
<keyword id="KW-0597">Phosphoprotein</keyword>
<keyword id="KW-1185">Reference proteome</keyword>
<keyword id="KW-0677">Repeat</keyword>
<keyword id="KW-0687">Ribonucleoprotein</keyword>
<keyword id="KW-0694">RNA-binding</keyword>
<keyword id="KW-0832">Ubl conjugation</keyword>
<protein>
    <recommendedName>
        <fullName>Heterogeneous nuclear ribonucleoprotein L</fullName>
        <shortName>hnRNP L</shortName>
    </recommendedName>
</protein>
<organism>
    <name type="scientific">Mus musculus</name>
    <name type="common">Mouse</name>
    <dbReference type="NCBI Taxonomy" id="10090"/>
    <lineage>
        <taxon>Eukaryota</taxon>
        <taxon>Metazoa</taxon>
        <taxon>Chordata</taxon>
        <taxon>Craniata</taxon>
        <taxon>Vertebrata</taxon>
        <taxon>Euteleostomi</taxon>
        <taxon>Mammalia</taxon>
        <taxon>Eutheria</taxon>
        <taxon>Euarchontoglires</taxon>
        <taxon>Glires</taxon>
        <taxon>Rodentia</taxon>
        <taxon>Myomorpha</taxon>
        <taxon>Muroidea</taxon>
        <taxon>Muridae</taxon>
        <taxon>Murinae</taxon>
        <taxon>Mus</taxon>
        <taxon>Mus</taxon>
    </lineage>
</organism>
<comment type="function">
    <text evidence="2 5">Splicing factor binding to exonic or intronic sites and acting as either an activator or repressor of exon inclusion (PubMed:22523384). Exhibits a binding preference for CA-rich elements. Component of the heterogeneous nuclear ribonucleoprotein (hnRNP) complexes and associated with most nascent transcripts. Associates, together with APEX1, to the negative calcium responsive element (nCaRE) B2 of the APEX2 promoter. As part of a ribonucleoprotein complex composed at least of ZNF827, HNRNPK and the circular RNA circZNF827 that nucleates the complex on chromatin, may negatively regulate the transcription of genes involved in neuronal differentiation (By similarity). Regulates alternative splicing of a core group of genes involved in neuronal differentiation, likely by mediating H3K36me3-coupled transcription elongation and co-transcriptional RNA processing via interaction with CHD8.</text>
</comment>
<comment type="subunit">
    <text evidence="1 2 6">Identified in a IGF2BP1-dependent mRNP granule complex containing untranslated mRNAs. Interacts with HNRNPLL. Interacts with APEX1; the interaction is DNA-dependent. Component of a complex with SETD2 (By similarity). Interacts with ELAVL1 (By similarity). Part of a transcription inhibitory ribonucleoprotein complex composed at least of the circular RNA circZNF827, ZNF827 and HNRNPK (By similarity). Interacts with CHD8 in an RNA-dependent manner.</text>
</comment>
<comment type="subcellular location">
    <subcellularLocation>
        <location evidence="2 8">Nucleus</location>
        <location evidence="2 8">Nucleoplasm</location>
    </subcellularLocation>
    <subcellularLocation>
        <location evidence="2">Cytoplasm</location>
    </subcellularLocation>
    <text evidence="2">Localized in cytoplasmic mRNP granules containing untranslated mRNAs. These granules are not identical with P bodies or stress granules.</text>
</comment>
<comment type="tissue specificity">
    <text evidence="5">Detected in hematopoietic cells, including lymphoid progenitor cells.</text>
</comment>
<comment type="domain">
    <text evidence="2">RRM domain 2 has moderate RNA-binding affinity. RRM domains 3 and 4 may facilitate RNA looping when binding to two appropriately separated binding sites within the same target pre-mRNA.</text>
</comment>
<comment type="PTM">
    <text evidence="2">Phosphorylation at Ser-541 by CaMK4 enhances interaction with a CaMK4-responsive RNA element (CaRRE1), and prevents inclusion of the stress axis-regulated exon (STREX) of the KCNMA1 potassium channel transcripts upon membrane depolarization.</text>
</comment>
<comment type="disruption phenotype">
    <text evidence="5">Complete lethality during early embryonic development.</text>
</comment>
<comment type="sequence caution" evidence="7">
    <conflict type="erroneous initiation">
        <sequence resource="EMBL-CDS" id="AAH27206"/>
    </conflict>
    <text>Truncated N-terminus.</text>
</comment>
<sequence>MSRRLLPRAEKRRRRLEQRQQPDEQLRRAGAMVKMAAAGGGGGGGRYYGGGNEGGRAPKRLKTENAGDQHGGGGGGGSGAAGGGGGENYDDPHKTPASPVVHIRGLIDGVVEADLVEALQEFGPISYVVVMPKKRQALVEFEDVLGACNAVNYAADNQIYIAGHPAFVNYSTSQKISRPGDSDDSRSVNSVLLFTILNPIYSITTDVLYTICNPCGPVQRIVIFRKNGVQAMVEFDSVQSAQRAKASLNGADIYSGCCTLKIEYAKPTRLNVFKNDQDTWDYTNPNLSGQGDPGSNPNKRQRQPPLLGDHPAEYGGPHGGYHSHYHDEGYGPPPPHYEGRRMGPPVGGHRRGPSRYGPQYGHPPPPPPPPDYGPHADSPVLMVYGLDQSKMNCDRVFNVFCLYGNVEKVKFMKSKPGAAMVEMADGYAVDRAITHLNNNFMFGQKMNVCVSKQPAIMPGQSYGLEDGSCSYKDFSESRNNRFSTPEQAAKNRIQHPSNVLHFFNAPLEVTEENFFEICDELGVKRPTSVKVFSGKSERSSSGLLEWDSKSDALETLGFLNHYQMKNPNGPYPYTLKLCFSTAQHAS</sequence>
<proteinExistence type="evidence at protein level"/>
<name>HNRPL_MOUSE</name>
<accession>Q8R081</accession>
<accession>O54789</accession>
<accession>Q499X2</accession>
<accession>Q8K0S7</accession>
<reference key="1">
    <citation type="journal article" date="2004" name="Genome Res.">
        <title>The status, quality, and expansion of the NIH full-length cDNA project: the Mammalian Gene Collection (MGC).</title>
        <authorList>
            <consortium name="The MGC Project Team"/>
        </authorList>
    </citation>
    <scope>NUCLEOTIDE SEQUENCE [LARGE SCALE MRNA]</scope>
    <source>
        <strain>FVB/N</strain>
        <tissue>Colon</tissue>
        <tissue>Salivary gland</tissue>
    </source>
</reference>
<reference key="2">
    <citation type="submission" date="1997-12" db="EMBL/GenBank/DDBJ databases">
        <title>Mouse ribonucleoprotein.</title>
        <authorList>
            <person name="Sakai N."/>
            <person name="Saitou Y."/>
            <person name="Toyota T."/>
        </authorList>
    </citation>
    <scope>NUCLEOTIDE SEQUENCE [MRNA] OF 388-586</scope>
</reference>
<reference key="3">
    <citation type="submission" date="2007-07" db="UniProtKB">
        <authorList>
            <person name="Lubec G."/>
            <person name="Yang J.W."/>
            <person name="Zigmond M."/>
        </authorList>
    </citation>
    <scope>PROTEIN SEQUENCE OF 396-408 AND 566-576</scope>
    <source>
        <tissue>Brain</tissue>
    </source>
</reference>
<reference key="4">
    <citation type="journal article" date="2010" name="Cell">
        <title>A tissue-specific atlas of mouse protein phosphorylation and expression.</title>
        <authorList>
            <person name="Huttlin E.L."/>
            <person name="Jedrychowski M.P."/>
            <person name="Elias J.E."/>
            <person name="Goswami T."/>
            <person name="Rad R."/>
            <person name="Beausoleil S.A."/>
            <person name="Villen J."/>
            <person name="Haas W."/>
            <person name="Sowa M.E."/>
            <person name="Gygi S.P."/>
        </authorList>
    </citation>
    <scope>PHOSPHORYLATION [LARGE SCALE ANALYSIS] AT SER-378</scope>
    <scope>IDENTIFICATION BY MASS SPECTROMETRY [LARGE SCALE ANALYSIS]</scope>
    <source>
        <tissue>Brain</tissue>
        <tissue>Brown adipose tissue</tissue>
        <tissue>Heart</tissue>
        <tissue>Kidney</tissue>
        <tissue>Liver</tissue>
        <tissue>Lung</tissue>
        <tissue>Pancreas</tissue>
        <tissue>Spleen</tissue>
        <tissue>Testis</tissue>
    </source>
</reference>
<reference key="5">
    <citation type="journal article" date="2012" name="J. Immunol.">
        <title>Alternative splicing controlled by heterogeneous nuclear ribonucleoprotein L regulates development, proliferation, and migration of thymic pre-T cells.</title>
        <authorList>
            <person name="Gaudreau M.C."/>
            <person name="Heyd F."/>
            <person name="Bastien R."/>
            <person name="Wilhelm B."/>
            <person name="Moeroey T."/>
        </authorList>
    </citation>
    <scope>DISRUPTION PHENOTYPE</scope>
    <scope>FUNCTION</scope>
    <scope>TISSUE SPECIFICITY</scope>
</reference>
<reference key="6">
    <citation type="journal article" date="2014" name="Mol. Cell. Proteomics">
        <title>Immunoaffinity enrichment and mass spectrometry analysis of protein methylation.</title>
        <authorList>
            <person name="Guo A."/>
            <person name="Gu H."/>
            <person name="Zhou J."/>
            <person name="Mulhern D."/>
            <person name="Wang Y."/>
            <person name="Lee K.A."/>
            <person name="Yang V."/>
            <person name="Aguiar M."/>
            <person name="Kornhauser J."/>
            <person name="Jia X."/>
            <person name="Ren J."/>
            <person name="Beausoleil S.A."/>
            <person name="Silva J.C."/>
            <person name="Vemulapalli V."/>
            <person name="Bedford M.T."/>
            <person name="Comb M.J."/>
        </authorList>
    </citation>
    <scope>METHYLATION [LARGE SCALE ANALYSIS] AT ARG-351 AND ARG-355</scope>
    <scope>IDENTIFICATION BY MASS SPECTROMETRY [LARGE SCALE ANALYSIS]</scope>
    <source>
        <tissue>Brain</tissue>
    </source>
</reference>
<reference key="7">
    <citation type="journal article" date="2022" name="Nucleic Acids Res.">
        <title>CHD8 suppression impacts on histone H3 lysine 36 trimethylation and alters RNA alternative splicing.</title>
        <authorList>
            <person name="Kerschbamer E."/>
            <person name="Arnoldi M."/>
            <person name="Tripathi T."/>
            <person name="Pellegrini M."/>
            <person name="Maturi S."/>
            <person name="Erdin S."/>
            <person name="Salviato E."/>
            <person name="Di Leva F."/>
            <person name="Sebestyen E."/>
            <person name="Dassi E."/>
            <person name="Zarantonello G."/>
            <person name="Benelli M."/>
            <person name="Campos E."/>
            <person name="Basson M.A."/>
            <person name="Gusella J.F."/>
            <person name="Gustincich S."/>
            <person name="Piazza S."/>
            <person name="Demichelis F."/>
            <person name="Talkowski M.E."/>
            <person name="Ferrari F."/>
            <person name="Biagioli M."/>
        </authorList>
    </citation>
    <scope>SUBCELLULAR LOCATION</scope>
    <scope>INTERACTION WITH CHD8</scope>
</reference>
<reference key="8">
    <citation type="submission" date="2011-11" db="PDB data bank">
        <title>Crystal structure of a heterogeneous nuclear ribonucleoprotein l (hnrpl) from Mus musculus at 1.60 A resolution.</title>
        <authorList>
            <consortium name="Joint center for structural genomics (JCSG)"/>
        </authorList>
    </citation>
    <scope>X-RAY CRYSTALLOGRAPHY (1.6 ANGSTROMS) OF 376-579</scope>
</reference>
<feature type="chain" id="PRO_0000081863" description="Heterogeneous nuclear ribonucleoprotein L">
    <location>
        <begin position="1"/>
        <end position="586"/>
    </location>
</feature>
<feature type="domain" description="RRM 1" evidence="3">
    <location>
        <begin position="99"/>
        <end position="173"/>
    </location>
</feature>
<feature type="domain" description="RRM 2" evidence="3">
    <location>
        <begin position="190"/>
        <end position="267"/>
    </location>
</feature>
<feature type="domain" description="RRM 3" evidence="3">
    <location>
        <begin position="379"/>
        <end position="476"/>
    </location>
</feature>
<feature type="domain" description="RRM 4" evidence="3">
    <location>
        <begin position="492"/>
        <end position="580"/>
    </location>
</feature>
<feature type="region of interest" description="Disordered" evidence="4">
    <location>
        <begin position="1"/>
        <end position="97"/>
    </location>
</feature>
<feature type="region of interest" description="Disordered" evidence="4">
    <location>
        <begin position="281"/>
        <end position="376"/>
    </location>
</feature>
<feature type="compositionally biased region" description="Basic residues" evidence="4">
    <location>
        <begin position="1"/>
        <end position="16"/>
    </location>
</feature>
<feature type="compositionally biased region" description="Basic and acidic residues" evidence="4">
    <location>
        <begin position="17"/>
        <end position="27"/>
    </location>
</feature>
<feature type="compositionally biased region" description="Low complexity" evidence="4">
    <location>
        <begin position="28"/>
        <end position="37"/>
    </location>
</feature>
<feature type="compositionally biased region" description="Gly residues" evidence="4">
    <location>
        <begin position="38"/>
        <end position="54"/>
    </location>
</feature>
<feature type="compositionally biased region" description="Gly residues" evidence="4">
    <location>
        <begin position="69"/>
        <end position="87"/>
    </location>
</feature>
<feature type="compositionally biased region" description="Polar residues" evidence="4">
    <location>
        <begin position="281"/>
        <end position="298"/>
    </location>
</feature>
<feature type="compositionally biased region" description="Pro residues" evidence="4">
    <location>
        <begin position="361"/>
        <end position="372"/>
    </location>
</feature>
<feature type="modified residue" description="Phosphoserine" evidence="2">
    <location>
        <position position="98"/>
    </location>
</feature>
<feature type="modified residue" description="Phosphoserine" evidence="2">
    <location>
        <position position="182"/>
    </location>
</feature>
<feature type="modified residue" description="N6-acetyllysine" evidence="2">
    <location>
        <position position="266"/>
    </location>
</feature>
<feature type="modified residue" description="Phosphoserine" evidence="2">
    <location>
        <position position="288"/>
    </location>
</feature>
<feature type="modified residue" description="Phosphoserine" evidence="2">
    <location>
        <position position="295"/>
    </location>
</feature>
<feature type="modified residue" description="Asymmetric dimethylarginine" evidence="10">
    <location>
        <position position="351"/>
    </location>
</feature>
<feature type="modified residue" description="Asymmetric dimethylarginine" evidence="10">
    <location>
        <position position="355"/>
    </location>
</feature>
<feature type="modified residue" description="Phosphoserine" evidence="9">
    <location>
        <position position="378"/>
    </location>
</feature>
<feature type="modified residue" description="Phosphoserine; by CaMK4" evidence="2">
    <location>
        <position position="541"/>
    </location>
</feature>
<feature type="cross-link" description="Glycyl lysine isopeptide (Lys-Gly) (interchain with G-Cter in SUMO2)" evidence="2">
    <location>
        <position position="59"/>
    </location>
</feature>
<feature type="cross-link" description="Glycyl lysine isopeptide (Lys-Gly) (interchain with G-Cter in SUMO2)" evidence="2">
    <location>
        <position position="62"/>
    </location>
</feature>
<feature type="cross-link" description="Glycyl lysine isopeptide (Lys-Gly) (interchain with G-Cter in SUMO2)" evidence="2">
    <location>
        <position position="133"/>
    </location>
</feature>
<feature type="cross-link" description="Glycyl lysine isopeptide (Lys-Gly) (interchain with G-Cter in SUMO2)" evidence="2">
    <location>
        <position position="299"/>
    </location>
</feature>
<feature type="cross-link" description="Glycyl lysine isopeptide (Lys-Gly) (interchain with G-Cter in SUMO2)" evidence="2">
    <location>
        <position position="565"/>
    </location>
</feature>
<feature type="sequence conflict" description="In Ref. 2; BAA24237." evidence="7" ref="2">
    <original>Q</original>
    <variation>E</variation>
    <location>
        <position position="388"/>
    </location>
</feature>
<feature type="strand" evidence="12">
    <location>
        <begin position="379"/>
        <end position="384"/>
    </location>
</feature>
<feature type="turn" evidence="12">
    <location>
        <begin position="388"/>
        <end position="390"/>
    </location>
</feature>
<feature type="helix" evidence="12">
    <location>
        <begin position="393"/>
        <end position="400"/>
    </location>
</feature>
<feature type="turn" evidence="12">
    <location>
        <begin position="401"/>
        <end position="403"/>
    </location>
</feature>
<feature type="strand" evidence="12">
    <location>
        <begin position="406"/>
        <end position="411"/>
    </location>
</feature>
<feature type="strand" evidence="12">
    <location>
        <begin position="419"/>
        <end position="425"/>
    </location>
</feature>
<feature type="helix" evidence="12">
    <location>
        <begin position="426"/>
        <end position="436"/>
    </location>
</feature>
<feature type="strand" evidence="12">
    <location>
        <begin position="447"/>
        <end position="450"/>
    </location>
</feature>
<feature type="strand" evidence="11">
    <location>
        <begin position="452"/>
        <end position="455"/>
    </location>
</feature>
<feature type="strand" evidence="12">
    <location>
        <begin position="469"/>
        <end position="473"/>
    </location>
</feature>
<feature type="helix" evidence="12">
    <location>
        <begin position="485"/>
        <end position="488"/>
    </location>
</feature>
<feature type="strand" evidence="12">
    <location>
        <begin position="498"/>
        <end position="505"/>
    </location>
</feature>
<feature type="helix" evidence="12">
    <location>
        <begin position="511"/>
        <end position="521"/>
    </location>
</feature>
<feature type="strand" evidence="12">
    <location>
        <begin position="527"/>
        <end position="531"/>
    </location>
</feature>
<feature type="strand" evidence="12">
    <location>
        <begin position="536"/>
        <end position="545"/>
    </location>
</feature>
<feature type="helix" evidence="12">
    <location>
        <begin position="549"/>
        <end position="559"/>
    </location>
</feature>
<feature type="strand" evidence="12">
    <location>
        <begin position="567"/>
        <end position="571"/>
    </location>
</feature>
<feature type="strand" evidence="12">
    <location>
        <begin position="576"/>
        <end position="578"/>
    </location>
</feature>
<gene>
    <name type="primary">Hnrnpl</name>
    <name type="synonym">Hnrpl</name>
</gene>
<evidence type="ECO:0000250" key="1">
    <source>
        <dbReference type="UniProtKB" id="F1LQ48"/>
    </source>
</evidence>
<evidence type="ECO:0000250" key="2">
    <source>
        <dbReference type="UniProtKB" id="P14866"/>
    </source>
</evidence>
<evidence type="ECO:0000255" key="3">
    <source>
        <dbReference type="PROSITE-ProRule" id="PRU00176"/>
    </source>
</evidence>
<evidence type="ECO:0000256" key="4">
    <source>
        <dbReference type="SAM" id="MobiDB-lite"/>
    </source>
</evidence>
<evidence type="ECO:0000269" key="5">
    <source>
    </source>
</evidence>
<evidence type="ECO:0000269" key="6">
    <source>
    </source>
</evidence>
<evidence type="ECO:0000305" key="7"/>
<evidence type="ECO:0000305" key="8">
    <source>
    </source>
</evidence>
<evidence type="ECO:0007744" key="9">
    <source>
    </source>
</evidence>
<evidence type="ECO:0007744" key="10">
    <source>
    </source>
</evidence>
<evidence type="ECO:0007829" key="11">
    <source>
        <dbReference type="PDB" id="3S01"/>
    </source>
</evidence>
<evidence type="ECO:0007829" key="12">
    <source>
        <dbReference type="PDB" id="3TYT"/>
    </source>
</evidence>
<dbReference type="EMBL" id="BC027206">
    <property type="protein sequence ID" value="AAH27206.1"/>
    <property type="status" value="ALT_INIT"/>
    <property type="molecule type" value="mRNA"/>
</dbReference>
<dbReference type="EMBL" id="BC030461">
    <property type="protein sequence ID" value="AAH30461.1"/>
    <property type="molecule type" value="mRNA"/>
</dbReference>
<dbReference type="EMBL" id="BC099683">
    <property type="protein sequence ID" value="AAH99683.1"/>
    <property type="molecule type" value="mRNA"/>
</dbReference>
<dbReference type="EMBL" id="AB009392">
    <property type="protein sequence ID" value="BAA24237.1"/>
    <property type="molecule type" value="mRNA"/>
</dbReference>
<dbReference type="CCDS" id="CCDS39864.2"/>
<dbReference type="RefSeq" id="NP_796275.3">
    <property type="nucleotide sequence ID" value="NM_177301.5"/>
</dbReference>
<dbReference type="RefSeq" id="XP_006539621.1">
    <property type="nucleotide sequence ID" value="XM_006539558.2"/>
</dbReference>
<dbReference type="PDB" id="3S01">
    <property type="method" value="X-ray"/>
    <property type="resolution" value="2.15 A"/>
    <property type="chains" value="A=376-586"/>
</dbReference>
<dbReference type="PDB" id="3TYT">
    <property type="method" value="X-ray"/>
    <property type="resolution" value="1.60 A"/>
    <property type="chains" value="A=376-579"/>
</dbReference>
<dbReference type="PDBsum" id="3S01"/>
<dbReference type="PDBsum" id="3TYT"/>
<dbReference type="BMRB" id="Q8R081"/>
<dbReference type="SMR" id="Q8R081"/>
<dbReference type="BioGRID" id="200360">
    <property type="interactions" value="52"/>
</dbReference>
<dbReference type="FunCoup" id="Q8R081">
    <property type="interactions" value="4663"/>
</dbReference>
<dbReference type="IntAct" id="Q8R081">
    <property type="interactions" value="16"/>
</dbReference>
<dbReference type="MINT" id="Q8R081"/>
<dbReference type="STRING" id="10090.ENSMUSP00000133728"/>
<dbReference type="GlyGen" id="Q8R081">
    <property type="glycosylation" value="1 site, 1 O-linked glycan (1 site)"/>
</dbReference>
<dbReference type="iPTMnet" id="Q8R081"/>
<dbReference type="MetOSite" id="Q8R081"/>
<dbReference type="PhosphoSitePlus" id="Q8R081"/>
<dbReference type="SwissPalm" id="Q8R081"/>
<dbReference type="REPRODUCTION-2DPAGE" id="Q8R081"/>
<dbReference type="jPOST" id="Q8R081"/>
<dbReference type="PaxDb" id="10090-ENSMUSP00000134734"/>
<dbReference type="PeptideAtlas" id="Q8R081"/>
<dbReference type="ProteomicsDB" id="273312"/>
<dbReference type="Pumba" id="Q8R081"/>
<dbReference type="Antibodypedia" id="4276">
    <property type="antibodies" value="459 antibodies from 37 providers"/>
</dbReference>
<dbReference type="DNASU" id="15388"/>
<dbReference type="Ensembl" id="ENSMUST00000038572.15">
    <property type="protein sequence ID" value="ENSMUSP00000049407.9"/>
    <property type="gene ID" value="ENSMUSG00000015165.17"/>
</dbReference>
<dbReference type="Ensembl" id="ENSMUST00000174548.8">
    <property type="protein sequence ID" value="ENSMUSP00000133728.2"/>
    <property type="gene ID" value="ENSMUSG00000015165.17"/>
</dbReference>
<dbReference type="GeneID" id="15388"/>
<dbReference type="KEGG" id="mmu:15388"/>
<dbReference type="UCSC" id="uc009fzz.2">
    <property type="organism name" value="mouse"/>
</dbReference>
<dbReference type="AGR" id="MGI:104816"/>
<dbReference type="CTD" id="3191"/>
<dbReference type="MGI" id="MGI:104816">
    <property type="gene designation" value="Hnrnpl"/>
</dbReference>
<dbReference type="VEuPathDB" id="HostDB:ENSMUSG00000015165"/>
<dbReference type="eggNOG" id="KOG1456">
    <property type="taxonomic scope" value="Eukaryota"/>
</dbReference>
<dbReference type="GeneTree" id="ENSGT01030000234642"/>
<dbReference type="InParanoid" id="Q8R081"/>
<dbReference type="OMA" id="VYNAQYP"/>
<dbReference type="OrthoDB" id="302770at2759"/>
<dbReference type="PhylomeDB" id="Q8R081"/>
<dbReference type="Reactome" id="R-MMU-72163">
    <property type="pathway name" value="mRNA Splicing - Major Pathway"/>
</dbReference>
<dbReference type="Reactome" id="R-MMU-72203">
    <property type="pathway name" value="Processing of Capped Intron-Containing Pre-mRNA"/>
</dbReference>
<dbReference type="BioGRID-ORCS" id="15388">
    <property type="hits" value="31 hits in 79 CRISPR screens"/>
</dbReference>
<dbReference type="ChiTaRS" id="Hnrnpl">
    <property type="organism name" value="mouse"/>
</dbReference>
<dbReference type="EvolutionaryTrace" id="Q8R081"/>
<dbReference type="PRO" id="PR:Q8R081"/>
<dbReference type="Proteomes" id="UP000000589">
    <property type="component" value="Chromosome 7"/>
</dbReference>
<dbReference type="RNAct" id="Q8R081">
    <property type="molecule type" value="protein"/>
</dbReference>
<dbReference type="Bgee" id="ENSMUSG00000015165">
    <property type="expression patterns" value="Expressed in retinal neural layer and 248 other cell types or tissues"/>
</dbReference>
<dbReference type="ExpressionAtlas" id="Q8R081">
    <property type="expression patterns" value="baseline and differential"/>
</dbReference>
<dbReference type="GO" id="GO:0000785">
    <property type="term" value="C:chromatin"/>
    <property type="evidence" value="ECO:0000250"/>
    <property type="project" value="UniProtKB"/>
</dbReference>
<dbReference type="GO" id="GO:0005737">
    <property type="term" value="C:cytoplasm"/>
    <property type="evidence" value="ECO:0000250"/>
    <property type="project" value="UniProtKB"/>
</dbReference>
<dbReference type="GO" id="GO:0005654">
    <property type="term" value="C:nucleoplasm"/>
    <property type="evidence" value="ECO:0000250"/>
    <property type="project" value="UniProtKB"/>
</dbReference>
<dbReference type="GO" id="GO:0005634">
    <property type="term" value="C:nucleus"/>
    <property type="evidence" value="ECO:0000266"/>
    <property type="project" value="MGI"/>
</dbReference>
<dbReference type="GO" id="GO:0045120">
    <property type="term" value="C:pronucleus"/>
    <property type="evidence" value="ECO:0000314"/>
    <property type="project" value="MGI"/>
</dbReference>
<dbReference type="GO" id="GO:1990904">
    <property type="term" value="C:ribonucleoprotein complex"/>
    <property type="evidence" value="ECO:0000250"/>
    <property type="project" value="UniProtKB"/>
</dbReference>
<dbReference type="GO" id="GO:0035770">
    <property type="term" value="C:ribonucleoprotein granule"/>
    <property type="evidence" value="ECO:0000250"/>
    <property type="project" value="UniProtKB"/>
</dbReference>
<dbReference type="GO" id="GO:0045202">
    <property type="term" value="C:synapse"/>
    <property type="evidence" value="ECO:0000314"/>
    <property type="project" value="SynGO"/>
</dbReference>
<dbReference type="GO" id="GO:0097157">
    <property type="term" value="F:pre-mRNA intronic binding"/>
    <property type="evidence" value="ECO:0000250"/>
    <property type="project" value="UniProtKB"/>
</dbReference>
<dbReference type="GO" id="GO:0003723">
    <property type="term" value="F:RNA binding"/>
    <property type="evidence" value="ECO:0000314"/>
    <property type="project" value="MGI"/>
</dbReference>
<dbReference type="GO" id="GO:0000976">
    <property type="term" value="F:transcription cis-regulatory region binding"/>
    <property type="evidence" value="ECO:0000250"/>
    <property type="project" value="UniProtKB"/>
</dbReference>
<dbReference type="GO" id="GO:0006397">
    <property type="term" value="P:mRNA processing"/>
    <property type="evidence" value="ECO:0007669"/>
    <property type="project" value="InterPro"/>
</dbReference>
<dbReference type="GO" id="GO:0045892">
    <property type="term" value="P:negative regulation of DNA-templated transcription"/>
    <property type="evidence" value="ECO:0000250"/>
    <property type="project" value="UniProtKB"/>
</dbReference>
<dbReference type="GO" id="GO:0000381">
    <property type="term" value="P:regulation of alternative mRNA splicing, via spliceosome"/>
    <property type="evidence" value="ECO:0000315"/>
    <property type="project" value="UniProtKB"/>
</dbReference>
<dbReference type="CDD" id="cd12780">
    <property type="entry name" value="RRM1_hnRNPL"/>
    <property type="match status" value="1"/>
</dbReference>
<dbReference type="CDD" id="cd12785">
    <property type="entry name" value="RRM2_hnRNPL"/>
    <property type="match status" value="1"/>
</dbReference>
<dbReference type="CDD" id="cd12699">
    <property type="entry name" value="RRM3_hnRNPL"/>
    <property type="match status" value="1"/>
</dbReference>
<dbReference type="CDD" id="cd12704">
    <property type="entry name" value="RRM4_hnRNPL"/>
    <property type="match status" value="1"/>
</dbReference>
<dbReference type="FunFam" id="3.30.70.330:FF:000072">
    <property type="entry name" value="heterogeneous nuclear ribonucleoprotein L isoform X1"/>
    <property type="match status" value="1"/>
</dbReference>
<dbReference type="FunFam" id="3.30.70.330:FF:000052">
    <property type="entry name" value="Heterogeneous nuclear ribonucleoprotein L like"/>
    <property type="match status" value="1"/>
</dbReference>
<dbReference type="FunFam" id="3.30.70.330:FF:000073">
    <property type="entry name" value="Heterogeneous nuclear ribonucleoprotein L like"/>
    <property type="match status" value="1"/>
</dbReference>
<dbReference type="FunFam" id="3.30.70.330:FF:000104">
    <property type="entry name" value="Heterogeneous nuclear ribonucleoprotein L like"/>
    <property type="match status" value="1"/>
</dbReference>
<dbReference type="Gene3D" id="3.30.70.330">
    <property type="match status" value="4"/>
</dbReference>
<dbReference type="InterPro" id="IPR006536">
    <property type="entry name" value="HnRNP-L/PTB"/>
</dbReference>
<dbReference type="InterPro" id="IPR034816">
    <property type="entry name" value="hnRNP-L_RRM3"/>
</dbReference>
<dbReference type="InterPro" id="IPR055204">
    <property type="entry name" value="HNRNPL_RRM"/>
</dbReference>
<dbReference type="InterPro" id="IPR035005">
    <property type="entry name" value="hnRNPL_RRM1"/>
</dbReference>
<dbReference type="InterPro" id="IPR035008">
    <property type="entry name" value="hnRNPL_RRM2"/>
</dbReference>
<dbReference type="InterPro" id="IPR034817">
    <property type="entry name" value="hnRNPL_RRM4"/>
</dbReference>
<dbReference type="InterPro" id="IPR012677">
    <property type="entry name" value="Nucleotide-bd_a/b_plait_sf"/>
</dbReference>
<dbReference type="InterPro" id="IPR021790">
    <property type="entry name" value="PTBP1-like_RRM2"/>
</dbReference>
<dbReference type="InterPro" id="IPR035979">
    <property type="entry name" value="RBD_domain_sf"/>
</dbReference>
<dbReference type="InterPro" id="IPR000504">
    <property type="entry name" value="RRM_dom"/>
</dbReference>
<dbReference type="NCBIfam" id="TIGR01649">
    <property type="entry name" value="hnRNP-L_PTB"/>
    <property type="match status" value="1"/>
</dbReference>
<dbReference type="PANTHER" id="PTHR15592">
    <property type="entry name" value="MATRIN 3/NUCLEAR PROTEIN 220-RELATED"/>
    <property type="match status" value="1"/>
</dbReference>
<dbReference type="Pfam" id="PF00076">
    <property type="entry name" value="RRM_1"/>
    <property type="match status" value="1"/>
</dbReference>
<dbReference type="Pfam" id="PF22976">
    <property type="entry name" value="RRM_10"/>
    <property type="match status" value="1"/>
</dbReference>
<dbReference type="Pfam" id="PF13893">
    <property type="entry name" value="RRM_5"/>
    <property type="match status" value="1"/>
</dbReference>
<dbReference type="Pfam" id="PF11835">
    <property type="entry name" value="RRM_8"/>
    <property type="match status" value="1"/>
</dbReference>
<dbReference type="SMART" id="SM00360">
    <property type="entry name" value="RRM"/>
    <property type="match status" value="3"/>
</dbReference>
<dbReference type="SUPFAM" id="SSF54928">
    <property type="entry name" value="RNA-binding domain, RBD"/>
    <property type="match status" value="3"/>
</dbReference>
<dbReference type="PROSITE" id="PS50102">
    <property type="entry name" value="RRM"/>
    <property type="match status" value="3"/>
</dbReference>